<comment type="function">
    <text evidence="1 6">IGF-binding proteins prolong the half-life of IGFs and have been shown to either inhibit or stimulate the growth promoting effects of the IGFs in cell culture. They alter the interaction of IGFs with their cell surface receptors (By similarity). May be a putative tumor suppressor protein.</text>
</comment>
<comment type="subcellular location">
    <subcellularLocation>
        <location evidence="6">Secreted</location>
    </subcellularLocation>
</comment>
<comment type="tissue specificity">
    <text evidence="6">Expressed at the highest level in both brain and testis, with lower levels in the prostate, bladder and lung.</text>
</comment>
<comment type="induction">
    <text>Down-regulated in multiple tumors.</text>
</comment>
<reference key="1">
    <citation type="journal article" date="2005" name="Biochem. Biophys. Res. Commun.">
        <title>Identification of a novel insulin-like growth factor binding protein gene homologue with tumor suppressor like properties.</title>
        <authorList>
            <person name="Cai Z."/>
            <person name="Chen H.T."/>
            <person name="Boyle B."/>
            <person name="Rupp F."/>
            <person name="Funk W.D."/>
            <person name="Dedera D.A."/>
        </authorList>
    </citation>
    <scope>NUCLEOTIDE SEQUENCE [MRNA]</scope>
    <scope>TISSUE SPECIFICITY</scope>
    <scope>SUBCELLULAR LOCATION</scope>
    <scope>FUNCTION</scope>
    <source>
        <tissue>Testis</tissue>
    </source>
</reference>
<reference key="2">
    <citation type="journal article" date="2004" name="Nature">
        <title>DNA sequence and analysis of human chromosome 9.</title>
        <authorList>
            <person name="Humphray S.J."/>
            <person name="Oliver K."/>
            <person name="Hunt A.R."/>
            <person name="Plumb R.W."/>
            <person name="Loveland J.E."/>
            <person name="Howe K.L."/>
            <person name="Andrews T.D."/>
            <person name="Searle S."/>
            <person name="Hunt S.E."/>
            <person name="Scott C.E."/>
            <person name="Jones M.C."/>
            <person name="Ainscough R."/>
            <person name="Almeida J.P."/>
            <person name="Ambrose K.D."/>
            <person name="Ashwell R.I.S."/>
            <person name="Babbage A.K."/>
            <person name="Babbage S."/>
            <person name="Bagguley C.L."/>
            <person name="Bailey J."/>
            <person name="Banerjee R."/>
            <person name="Barker D.J."/>
            <person name="Barlow K.F."/>
            <person name="Bates K."/>
            <person name="Beasley H."/>
            <person name="Beasley O."/>
            <person name="Bird C.P."/>
            <person name="Bray-Allen S."/>
            <person name="Brown A.J."/>
            <person name="Brown J.Y."/>
            <person name="Burford D."/>
            <person name="Burrill W."/>
            <person name="Burton J."/>
            <person name="Carder C."/>
            <person name="Carter N.P."/>
            <person name="Chapman J.C."/>
            <person name="Chen Y."/>
            <person name="Clarke G."/>
            <person name="Clark S.Y."/>
            <person name="Clee C.M."/>
            <person name="Clegg S."/>
            <person name="Collier R.E."/>
            <person name="Corby N."/>
            <person name="Crosier M."/>
            <person name="Cummings A.T."/>
            <person name="Davies J."/>
            <person name="Dhami P."/>
            <person name="Dunn M."/>
            <person name="Dutta I."/>
            <person name="Dyer L.W."/>
            <person name="Earthrowl M.E."/>
            <person name="Faulkner L."/>
            <person name="Fleming C.J."/>
            <person name="Frankish A."/>
            <person name="Frankland J.A."/>
            <person name="French L."/>
            <person name="Fricker D.G."/>
            <person name="Garner P."/>
            <person name="Garnett J."/>
            <person name="Ghori J."/>
            <person name="Gilbert J.G.R."/>
            <person name="Glison C."/>
            <person name="Grafham D.V."/>
            <person name="Gribble S."/>
            <person name="Griffiths C."/>
            <person name="Griffiths-Jones S."/>
            <person name="Grocock R."/>
            <person name="Guy J."/>
            <person name="Hall R.E."/>
            <person name="Hammond S."/>
            <person name="Harley J.L."/>
            <person name="Harrison E.S.I."/>
            <person name="Hart E.A."/>
            <person name="Heath P.D."/>
            <person name="Henderson C.D."/>
            <person name="Hopkins B.L."/>
            <person name="Howard P.J."/>
            <person name="Howden P.J."/>
            <person name="Huckle E."/>
            <person name="Johnson C."/>
            <person name="Johnson D."/>
            <person name="Joy A.A."/>
            <person name="Kay M."/>
            <person name="Keenan S."/>
            <person name="Kershaw J.K."/>
            <person name="Kimberley A.M."/>
            <person name="King A."/>
            <person name="Knights A."/>
            <person name="Laird G.K."/>
            <person name="Langford C."/>
            <person name="Lawlor S."/>
            <person name="Leongamornlert D.A."/>
            <person name="Leversha M."/>
            <person name="Lloyd C."/>
            <person name="Lloyd D.M."/>
            <person name="Lovell J."/>
            <person name="Martin S."/>
            <person name="Mashreghi-Mohammadi M."/>
            <person name="Matthews L."/>
            <person name="McLaren S."/>
            <person name="McLay K.E."/>
            <person name="McMurray A."/>
            <person name="Milne S."/>
            <person name="Nickerson T."/>
            <person name="Nisbett J."/>
            <person name="Nordsiek G."/>
            <person name="Pearce A.V."/>
            <person name="Peck A.I."/>
            <person name="Porter K.M."/>
            <person name="Pandian R."/>
            <person name="Pelan S."/>
            <person name="Phillimore B."/>
            <person name="Povey S."/>
            <person name="Ramsey Y."/>
            <person name="Rand V."/>
            <person name="Scharfe M."/>
            <person name="Sehra H.K."/>
            <person name="Shownkeen R."/>
            <person name="Sims S.K."/>
            <person name="Skuce C.D."/>
            <person name="Smith M."/>
            <person name="Steward C.A."/>
            <person name="Swarbreck D."/>
            <person name="Sycamore N."/>
            <person name="Tester J."/>
            <person name="Thorpe A."/>
            <person name="Tracey A."/>
            <person name="Tromans A."/>
            <person name="Thomas D.W."/>
            <person name="Wall M."/>
            <person name="Wallis J.M."/>
            <person name="West A.P."/>
            <person name="Whitehead S.L."/>
            <person name="Willey D.L."/>
            <person name="Williams S.A."/>
            <person name="Wilming L."/>
            <person name="Wray P.W."/>
            <person name="Young L."/>
            <person name="Ashurst J.L."/>
            <person name="Coulson A."/>
            <person name="Blocker H."/>
            <person name="Durbin R.M."/>
            <person name="Sulston J.E."/>
            <person name="Hubbard T."/>
            <person name="Jackson M.J."/>
            <person name="Bentley D.R."/>
            <person name="Beck S."/>
            <person name="Rogers J."/>
            <person name="Dunham I."/>
        </authorList>
    </citation>
    <scope>NUCLEOTIDE SEQUENCE [LARGE SCALE GENOMIC DNA]</scope>
</reference>
<reference key="3">
    <citation type="submission" date="2005-09" db="EMBL/GenBank/DDBJ databases">
        <authorList>
            <person name="Mural R.J."/>
            <person name="Istrail S."/>
            <person name="Sutton G.G."/>
            <person name="Florea L."/>
            <person name="Halpern A.L."/>
            <person name="Mobarry C.M."/>
            <person name="Lippert R."/>
            <person name="Walenz B."/>
            <person name="Shatkay H."/>
            <person name="Dew I."/>
            <person name="Miller J.R."/>
            <person name="Flanigan M.J."/>
            <person name="Edwards N.J."/>
            <person name="Bolanos R."/>
            <person name="Fasulo D."/>
            <person name="Halldorsson B.V."/>
            <person name="Hannenhalli S."/>
            <person name="Turner R."/>
            <person name="Yooseph S."/>
            <person name="Lu F."/>
            <person name="Nusskern D.R."/>
            <person name="Shue B.C."/>
            <person name="Zheng X.H."/>
            <person name="Zhong F."/>
            <person name="Delcher A.L."/>
            <person name="Huson D.H."/>
            <person name="Kravitz S.A."/>
            <person name="Mouchard L."/>
            <person name="Reinert K."/>
            <person name="Remington K.A."/>
            <person name="Clark A.G."/>
            <person name="Waterman M.S."/>
            <person name="Eichler E.E."/>
            <person name="Adams M.D."/>
            <person name="Hunkapiller M.W."/>
            <person name="Myers E.W."/>
            <person name="Venter J.C."/>
        </authorList>
    </citation>
    <scope>NUCLEOTIDE SEQUENCE [LARGE SCALE GENOMIC DNA]</scope>
</reference>
<sequence>MPRLSLLLPLLLLLLLPLLPPLSPSLGIRDVGGRRPKCGPCRPEGCPAPAPCPAPGISALDECGCCARCLGAEGASCGGRAGGRCGPGLVCASQAAGAAPEGTGLCVCAQRGTVCGSDGRSYPSVCALRLRARHTPRAHPGHLHKARDGPCEFAPVVVVPPRSVHNVTGAQVGLSCEVRAVPTPVITWRKVTKSPEGTQALEELPGDHVNIAVQVRGGPSDHEATAWILINPLRKEDEGVYQCHAANMVGEAESHSTVTVLDLSKYRSFHFPAPDDRM</sequence>
<keyword id="KW-0002">3D-structure</keyword>
<keyword id="KW-1015">Disulfide bond</keyword>
<keyword id="KW-0325">Glycoprotein</keyword>
<keyword id="KW-0393">Immunoglobulin domain</keyword>
<keyword id="KW-1267">Proteomics identification</keyword>
<keyword id="KW-1185">Reference proteome</keyword>
<keyword id="KW-0964">Secreted</keyword>
<keyword id="KW-0732">Signal</keyword>
<feature type="signal peptide" evidence="2">
    <location>
        <begin position="1"/>
        <end position="25"/>
    </location>
</feature>
<feature type="chain" id="PRO_0000297687" description="Insulin-like growth factor-binding protein-like 1">
    <location>
        <begin position="26"/>
        <end position="278"/>
    </location>
</feature>
<feature type="domain" description="IGFBP N-terminal" evidence="4">
    <location>
        <begin position="34"/>
        <end position="109"/>
    </location>
</feature>
<feature type="domain" description="Kazal-like" evidence="5">
    <location>
        <begin position="95"/>
        <end position="153"/>
    </location>
</feature>
<feature type="domain" description="Ig-like C2-type">
    <location>
        <begin position="155"/>
        <end position="259"/>
    </location>
</feature>
<feature type="glycosylation site" description="N-linked (GlcNAc...) asparagine" evidence="2">
    <location>
        <position position="166"/>
    </location>
</feature>
<feature type="disulfide bond" evidence="4">
    <location>
        <begin position="38"/>
        <end position="63"/>
    </location>
</feature>
<feature type="disulfide bond" evidence="4">
    <location>
        <begin position="41"/>
        <end position="65"/>
    </location>
</feature>
<feature type="disulfide bond" evidence="4">
    <location>
        <begin position="46"/>
        <end position="66"/>
    </location>
</feature>
<feature type="disulfide bond" evidence="4">
    <location>
        <begin position="52"/>
        <end position="69"/>
    </location>
</feature>
<feature type="disulfide bond" evidence="4">
    <location>
        <begin position="77"/>
        <end position="91"/>
    </location>
</feature>
<feature type="disulfide bond" evidence="4">
    <location>
        <begin position="85"/>
        <end position="106"/>
    </location>
</feature>
<feature type="disulfide bond" evidence="5">
    <location>
        <begin position="115"/>
        <end position="151"/>
    </location>
</feature>
<feature type="disulfide bond" evidence="3">
    <location>
        <begin position="176"/>
        <end position="243"/>
    </location>
</feature>
<name>IBPL1_HUMAN</name>
<organism>
    <name type="scientific">Homo sapiens</name>
    <name type="common">Human</name>
    <dbReference type="NCBI Taxonomy" id="9606"/>
    <lineage>
        <taxon>Eukaryota</taxon>
        <taxon>Metazoa</taxon>
        <taxon>Chordata</taxon>
        <taxon>Craniata</taxon>
        <taxon>Vertebrata</taxon>
        <taxon>Euteleostomi</taxon>
        <taxon>Mammalia</taxon>
        <taxon>Eutheria</taxon>
        <taxon>Euarchontoglires</taxon>
        <taxon>Primates</taxon>
        <taxon>Haplorrhini</taxon>
        <taxon>Catarrhini</taxon>
        <taxon>Hominidae</taxon>
        <taxon>Homo</taxon>
    </lineage>
</organism>
<proteinExistence type="evidence at protein level"/>
<protein>
    <recommendedName>
        <fullName>Insulin-like growth factor-binding protein-like 1</fullName>
    </recommendedName>
    <alternativeName>
        <fullName>IGFBP-related protein 10</fullName>
    </alternativeName>
    <alternativeName>
        <fullName>Insulin-like growth factor-binding-related protein 4</fullName>
        <shortName>IGFBP-rP4</shortName>
    </alternativeName>
</protein>
<gene>
    <name type="primary">IGFBPL1</name>
    <name type="synonym">IGFBPRP4</name>
</gene>
<evidence type="ECO:0000250" key="1"/>
<evidence type="ECO:0000255" key="2"/>
<evidence type="ECO:0000255" key="3">
    <source>
        <dbReference type="PROSITE-ProRule" id="PRU00114"/>
    </source>
</evidence>
<evidence type="ECO:0000255" key="4">
    <source>
        <dbReference type="PROSITE-ProRule" id="PRU00653"/>
    </source>
</evidence>
<evidence type="ECO:0000255" key="5">
    <source>
        <dbReference type="PROSITE-ProRule" id="PRU00798"/>
    </source>
</evidence>
<evidence type="ECO:0000269" key="6">
    <source>
    </source>
</evidence>
<dbReference type="EMBL" id="AL135785">
    <property type="status" value="NOT_ANNOTATED_CDS"/>
    <property type="molecule type" value="Genomic_DNA"/>
</dbReference>
<dbReference type="EMBL" id="CH471071">
    <property type="protein sequence ID" value="EAW58251.1"/>
    <property type="molecule type" value="Genomic_DNA"/>
</dbReference>
<dbReference type="CCDS" id="CCDS35017.1"/>
<dbReference type="RefSeq" id="NP_001007564.1">
    <property type="nucleotide sequence ID" value="NM_001007563.3"/>
</dbReference>
<dbReference type="PDB" id="7MJ6">
    <property type="method" value="X-ray"/>
    <property type="resolution" value="1.95 A"/>
    <property type="chains" value="C=14-22"/>
</dbReference>
<dbReference type="PDB" id="7MJ7">
    <property type="method" value="X-ray"/>
    <property type="resolution" value="1.60 A"/>
    <property type="chains" value="C=14-24"/>
</dbReference>
<dbReference type="PDB" id="7MJ8">
    <property type="method" value="X-ray"/>
    <property type="resolution" value="1.79 A"/>
    <property type="chains" value="C=14-25"/>
</dbReference>
<dbReference type="PDB" id="7MJ9">
    <property type="method" value="X-ray"/>
    <property type="resolution" value="1.75 A"/>
    <property type="chains" value="C=14-22"/>
</dbReference>
<dbReference type="PDBsum" id="7MJ6"/>
<dbReference type="PDBsum" id="7MJ7"/>
<dbReference type="PDBsum" id="7MJ8"/>
<dbReference type="PDBsum" id="7MJ9"/>
<dbReference type="SMR" id="Q8WX77"/>
<dbReference type="BioGRID" id="131417">
    <property type="interactions" value="26"/>
</dbReference>
<dbReference type="FunCoup" id="Q8WX77">
    <property type="interactions" value="73"/>
</dbReference>
<dbReference type="IntAct" id="Q8WX77">
    <property type="interactions" value="4"/>
</dbReference>
<dbReference type="STRING" id="9606.ENSP00000366923"/>
<dbReference type="GlyCosmos" id="Q8WX77">
    <property type="glycosylation" value="1 site, No reported glycans"/>
</dbReference>
<dbReference type="GlyGen" id="Q8WX77">
    <property type="glycosylation" value="3 sites, 1 N-linked glycan (1 site), 1 O-linked glycan (2 sites)"/>
</dbReference>
<dbReference type="iPTMnet" id="Q8WX77"/>
<dbReference type="PhosphoSitePlus" id="Q8WX77"/>
<dbReference type="BioMuta" id="IGFBPL1"/>
<dbReference type="DMDM" id="74751604"/>
<dbReference type="jPOST" id="Q8WX77"/>
<dbReference type="MassIVE" id="Q8WX77"/>
<dbReference type="PaxDb" id="9606-ENSP00000366923"/>
<dbReference type="PeptideAtlas" id="Q8WX77"/>
<dbReference type="ProteomicsDB" id="74977"/>
<dbReference type="Antibodypedia" id="62957">
    <property type="antibodies" value="53 antibodies from 16 providers"/>
</dbReference>
<dbReference type="DNASU" id="347252"/>
<dbReference type="Ensembl" id="ENST00000377694.2">
    <property type="protein sequence ID" value="ENSP00000366923.1"/>
    <property type="gene ID" value="ENSG00000137142.5"/>
</dbReference>
<dbReference type="GeneID" id="347252"/>
<dbReference type="KEGG" id="hsa:347252"/>
<dbReference type="MANE-Select" id="ENST00000377694.2">
    <property type="protein sequence ID" value="ENSP00000366923.1"/>
    <property type="RefSeq nucleotide sequence ID" value="NM_001007563.3"/>
    <property type="RefSeq protein sequence ID" value="NP_001007564.1"/>
</dbReference>
<dbReference type="UCSC" id="uc004aaz.4">
    <property type="organism name" value="human"/>
</dbReference>
<dbReference type="AGR" id="HGNC:20081"/>
<dbReference type="CTD" id="347252"/>
<dbReference type="DisGeNET" id="347252"/>
<dbReference type="GeneCards" id="IGFBPL1"/>
<dbReference type="HGNC" id="HGNC:20081">
    <property type="gene designation" value="IGFBPL1"/>
</dbReference>
<dbReference type="HPA" id="ENSG00000137142">
    <property type="expression patterns" value="Tissue enriched (thyroid)"/>
</dbReference>
<dbReference type="MIM" id="610413">
    <property type="type" value="gene"/>
</dbReference>
<dbReference type="neXtProt" id="NX_Q8WX77"/>
<dbReference type="OpenTargets" id="ENSG00000137142"/>
<dbReference type="PharmGKB" id="PA134937275"/>
<dbReference type="VEuPathDB" id="HostDB:ENSG00000137142"/>
<dbReference type="eggNOG" id="ENOG502QSKF">
    <property type="taxonomic scope" value="Eukaryota"/>
</dbReference>
<dbReference type="GeneTree" id="ENSGT00530000063555"/>
<dbReference type="HOGENOM" id="CLU_075590_0_1_1"/>
<dbReference type="InParanoid" id="Q8WX77"/>
<dbReference type="OMA" id="PGMVCVS"/>
<dbReference type="OrthoDB" id="9535846at2759"/>
<dbReference type="PAN-GO" id="Q8WX77">
    <property type="GO annotations" value="2 GO annotations based on evolutionary models"/>
</dbReference>
<dbReference type="PhylomeDB" id="Q8WX77"/>
<dbReference type="TreeFam" id="TF331645"/>
<dbReference type="PathwayCommons" id="Q8WX77"/>
<dbReference type="SignaLink" id="Q8WX77"/>
<dbReference type="BioGRID-ORCS" id="347252">
    <property type="hits" value="30 hits in 1138 CRISPR screens"/>
</dbReference>
<dbReference type="ChiTaRS" id="IGFBPL1">
    <property type="organism name" value="human"/>
</dbReference>
<dbReference type="GenomeRNAi" id="347252"/>
<dbReference type="Pharos" id="Q8WX77">
    <property type="development level" value="Tbio"/>
</dbReference>
<dbReference type="PRO" id="PR:Q8WX77"/>
<dbReference type="Proteomes" id="UP000005640">
    <property type="component" value="Chromosome 9"/>
</dbReference>
<dbReference type="RNAct" id="Q8WX77">
    <property type="molecule type" value="protein"/>
</dbReference>
<dbReference type="Bgee" id="ENSG00000137142">
    <property type="expression patterns" value="Expressed in ganglionic eminence and 100 other cell types or tissues"/>
</dbReference>
<dbReference type="GO" id="GO:0062023">
    <property type="term" value="C:collagen-containing extracellular matrix"/>
    <property type="evidence" value="ECO:0000318"/>
    <property type="project" value="GO_Central"/>
</dbReference>
<dbReference type="GO" id="GO:0005615">
    <property type="term" value="C:extracellular space"/>
    <property type="evidence" value="ECO:0000314"/>
    <property type="project" value="UniProtKB"/>
</dbReference>
<dbReference type="GO" id="GO:0005520">
    <property type="term" value="F:insulin-like growth factor binding"/>
    <property type="evidence" value="ECO:0007669"/>
    <property type="project" value="InterPro"/>
</dbReference>
<dbReference type="GO" id="GO:0071228">
    <property type="term" value="P:cellular response to tumor cell"/>
    <property type="evidence" value="ECO:0000270"/>
    <property type="project" value="UniProtKB"/>
</dbReference>
<dbReference type="GO" id="GO:0001558">
    <property type="term" value="P:regulation of cell growth"/>
    <property type="evidence" value="ECO:0007669"/>
    <property type="project" value="InterPro"/>
</dbReference>
<dbReference type="GO" id="GO:0009966">
    <property type="term" value="P:regulation of signal transduction"/>
    <property type="evidence" value="ECO:0000318"/>
    <property type="project" value="GO_Central"/>
</dbReference>
<dbReference type="CDD" id="cd00096">
    <property type="entry name" value="Ig"/>
    <property type="match status" value="1"/>
</dbReference>
<dbReference type="CDD" id="cd00104">
    <property type="entry name" value="KAZAL_FS"/>
    <property type="match status" value="1"/>
</dbReference>
<dbReference type="FunFam" id="4.10.40.20:FF:000009">
    <property type="entry name" value="Insulin like growth factor binding protein like 1"/>
    <property type="match status" value="1"/>
</dbReference>
<dbReference type="FunFam" id="2.60.40.10:FF:000763">
    <property type="entry name" value="Insulin-like growth factor binding protein 7"/>
    <property type="match status" value="1"/>
</dbReference>
<dbReference type="FunFam" id="3.30.60.30:FF:000063">
    <property type="entry name" value="Insulin-like growth factor-binding protein-like 1"/>
    <property type="match status" value="1"/>
</dbReference>
<dbReference type="Gene3D" id="3.30.60.30">
    <property type="match status" value="1"/>
</dbReference>
<dbReference type="Gene3D" id="4.10.40.20">
    <property type="match status" value="1"/>
</dbReference>
<dbReference type="Gene3D" id="2.60.40.10">
    <property type="entry name" value="Immunoglobulins"/>
    <property type="match status" value="1"/>
</dbReference>
<dbReference type="InterPro" id="IPR009030">
    <property type="entry name" value="Growth_fac_rcpt_cys_sf"/>
</dbReference>
<dbReference type="InterPro" id="IPR007110">
    <property type="entry name" value="Ig-like_dom"/>
</dbReference>
<dbReference type="InterPro" id="IPR036179">
    <property type="entry name" value="Ig-like_dom_sf"/>
</dbReference>
<dbReference type="InterPro" id="IPR013783">
    <property type="entry name" value="Ig-like_fold"/>
</dbReference>
<dbReference type="InterPro" id="IPR013098">
    <property type="entry name" value="Ig_I-set"/>
</dbReference>
<dbReference type="InterPro" id="IPR003599">
    <property type="entry name" value="Ig_sub"/>
</dbReference>
<dbReference type="InterPro" id="IPR003598">
    <property type="entry name" value="Ig_sub2"/>
</dbReference>
<dbReference type="InterPro" id="IPR000867">
    <property type="entry name" value="IGFBP-like"/>
</dbReference>
<dbReference type="InterPro" id="IPR011390">
    <property type="entry name" value="IGFBP_rP_mac25"/>
</dbReference>
<dbReference type="InterPro" id="IPR002350">
    <property type="entry name" value="Kazal_dom"/>
</dbReference>
<dbReference type="InterPro" id="IPR036058">
    <property type="entry name" value="Kazal_dom_sf"/>
</dbReference>
<dbReference type="PANTHER" id="PTHR14186">
    <property type="entry name" value="INSULIN-LIKE GROWTH FACTOR BINDING PROTEIN-RELATED"/>
    <property type="match status" value="1"/>
</dbReference>
<dbReference type="PANTHER" id="PTHR14186:SF16">
    <property type="entry name" value="INSULIN-LIKE GROWTH FACTOR-BINDING PROTEIN-LIKE 1"/>
    <property type="match status" value="1"/>
</dbReference>
<dbReference type="Pfam" id="PF07679">
    <property type="entry name" value="I-set"/>
    <property type="match status" value="1"/>
</dbReference>
<dbReference type="Pfam" id="PF00219">
    <property type="entry name" value="IGFBP"/>
    <property type="match status" value="1"/>
</dbReference>
<dbReference type="Pfam" id="PF07648">
    <property type="entry name" value="Kazal_2"/>
    <property type="match status" value="1"/>
</dbReference>
<dbReference type="PIRSF" id="PIRSF018239">
    <property type="entry name" value="IGFBP_rP_mac25"/>
    <property type="match status" value="1"/>
</dbReference>
<dbReference type="SMART" id="SM00121">
    <property type="entry name" value="IB"/>
    <property type="match status" value="1"/>
</dbReference>
<dbReference type="SMART" id="SM00409">
    <property type="entry name" value="IG"/>
    <property type="match status" value="1"/>
</dbReference>
<dbReference type="SMART" id="SM00408">
    <property type="entry name" value="IGc2"/>
    <property type="match status" value="1"/>
</dbReference>
<dbReference type="SMART" id="SM00280">
    <property type="entry name" value="KAZAL"/>
    <property type="match status" value="1"/>
</dbReference>
<dbReference type="SUPFAM" id="SSF57184">
    <property type="entry name" value="Growth factor receptor domain"/>
    <property type="match status" value="1"/>
</dbReference>
<dbReference type="SUPFAM" id="SSF48726">
    <property type="entry name" value="Immunoglobulin"/>
    <property type="match status" value="1"/>
</dbReference>
<dbReference type="SUPFAM" id="SSF100895">
    <property type="entry name" value="Kazal-type serine protease inhibitors"/>
    <property type="match status" value="1"/>
</dbReference>
<dbReference type="PROSITE" id="PS50835">
    <property type="entry name" value="IG_LIKE"/>
    <property type="match status" value="1"/>
</dbReference>
<dbReference type="PROSITE" id="PS51323">
    <property type="entry name" value="IGFBP_N_2"/>
    <property type="match status" value="1"/>
</dbReference>
<dbReference type="PROSITE" id="PS51465">
    <property type="entry name" value="KAZAL_2"/>
    <property type="match status" value="1"/>
</dbReference>
<accession>Q8WX77</accession>